<organism>
    <name type="scientific">Arabidopsis thaliana</name>
    <name type="common">Mouse-ear cress</name>
    <dbReference type="NCBI Taxonomy" id="3702"/>
    <lineage>
        <taxon>Eukaryota</taxon>
        <taxon>Viridiplantae</taxon>
        <taxon>Streptophyta</taxon>
        <taxon>Embryophyta</taxon>
        <taxon>Tracheophyta</taxon>
        <taxon>Spermatophyta</taxon>
        <taxon>Magnoliopsida</taxon>
        <taxon>eudicotyledons</taxon>
        <taxon>Gunneridae</taxon>
        <taxon>Pentapetalae</taxon>
        <taxon>rosids</taxon>
        <taxon>malvids</taxon>
        <taxon>Brassicales</taxon>
        <taxon>Brassicaceae</taxon>
        <taxon>Camelineae</taxon>
        <taxon>Arabidopsis</taxon>
    </lineage>
</organism>
<sequence length="1155" mass="127255">MSTWHLFSDSSGDGFRWEVAGRILQSVSDSTPTKALESTAPLPSMADLLLQGCSKLIEREESMPGEIPMFRTGLGKSVVLKESSIAKAKSILAENVAYSDLQNTNCSIPQTRQVDTAETMPMFRTALGKTVPLKESSIAKPLSILGSDMIIDSDNVLPRESGFGVPNSLFQTASNKKVNVSSAGLARAKALLGLEEDDLNGFNHVNQSSSSLQQHGWSGLKTHEEFDATVVKHHSGTPGQYENYVSGKRSEILNPSLKVPPTKFQTAGGKSLSVSAEALKRARNLLGDPELGSFFDDVAGGDQFFTPQKDERLSDIAINNGSVNTGYIAHEEKTSNKHTSNSFVSPLHSSSKQFRSVNLENLASGGNLIKKFDTAVDETNCALNISKPATHGLSNNRPLASDMAVNNSKGNGFIPRARQLGRPADQPLVDITNRRDTAYANNKQDSTQKKRLGKTVSVSPFKRPRISSFKTPLKKNAQQASSGLSVVSCDTLTSKKVLSTRYPEKSPRVYIKEFFGMHPTATTRMDYVPDHVRRIKSSNADKYVFCDESSSNKVGAETFLQMLAESGASLQHASRKWVTNHYRWIVWKLACYDIYYPAKCRGNFLTITNVLEELKYRYEREVNHGHCSAIKRILSGDAPASSMMVLCISAINPRTDNGSQEAHCSDNCSNVKVELTDGWYSMNAALDVVLTKQLNAGKLFVGQKLRILGAGLSGWATPTSPLEAVISSTICLLLNINGTYRAHWADRLGFCKEIGVPLAFNCIKCNGGPVPKTLAGITRIYPILYKERLGEKKSIVRSERIESRIIQLHNQRRSALVEGIMCEYQRGINGVHSQNDTDSEEGAKVFKLLETAAEPELLMAEMSLEQLTSFTTYKAKFEAAKQMQMEKSVAKALEDAGLGERNVTPFMRIRLVGLTSLSNEGEHNPKEGIVTIWDPTERQRTELTEGKIYIMKGLVPMNSDSETLYLHARGSSSRWQPLSPKDSENFQPFFNPRKPISLSNLGEIPLSSEFDIAAYVVYVGDAYTDVLQKKQWVFVTDGSTQHSGEISNSLLAISFSTPFMDDSSVSHISHNLVGSVVGFCNLIKRAKDATNEMWVAETTENSVYFINAEAAYSSHLKTRSAHIQTWAKLYSSKSVIHELRQRVLFIIGACKSPSC</sequence>
<keyword id="KW-0131">Cell cycle</keyword>
<keyword id="KW-0227">DNA damage</keyword>
<keyword id="KW-0233">DNA recombination</keyword>
<keyword id="KW-0234">DNA repair</keyword>
<keyword id="KW-0238">DNA-binding</keyword>
<keyword id="KW-0469">Meiosis</keyword>
<keyword id="KW-1185">Reference proteome</keyword>
<keyword id="KW-0677">Repeat</keyword>
<feature type="chain" id="PRO_0000430160" description="Protein BREAST CANCER SUSCEPTIBILITY 2 homolog B">
    <location>
        <begin position="1"/>
        <end position="1155"/>
    </location>
</feature>
<feature type="repeat" description="BRCA2 1" evidence="1">
    <location>
        <begin position="63"/>
        <end position="97"/>
    </location>
</feature>
<feature type="repeat" description="BRCA2 2" evidence="1">
    <location>
        <begin position="116"/>
        <end position="150"/>
    </location>
</feature>
<feature type="repeat" description="BRCA2 3" evidence="1">
    <location>
        <begin position="163"/>
        <end position="197"/>
    </location>
</feature>
<feature type="repeat" description="BRCA2 4" evidence="1">
    <location>
        <begin position="257"/>
        <end position="291"/>
    </location>
</feature>
<accession>Q7Y1C4</accession>
<accession>Q84W87</accession>
<accession>Q9M013</accession>
<evidence type="ECO:0000255" key="1">
    <source>
        <dbReference type="PROSITE-ProRule" id="PRU00032"/>
    </source>
</evidence>
<evidence type="ECO:0000269" key="2">
    <source>
    </source>
</evidence>
<evidence type="ECO:0000269" key="3">
    <source>
    </source>
</evidence>
<evidence type="ECO:0000269" key="4">
    <source>
    </source>
</evidence>
<evidence type="ECO:0000269" key="5">
    <source>
    </source>
</evidence>
<evidence type="ECO:0000303" key="6">
    <source>
    </source>
</evidence>
<evidence type="ECO:0000303" key="7">
    <source>
    </source>
</evidence>
<evidence type="ECO:0000305" key="8"/>
<evidence type="ECO:0000312" key="9">
    <source>
        <dbReference type="Araport" id="AT5G01630"/>
    </source>
</evidence>
<evidence type="ECO:0000312" key="10">
    <source>
        <dbReference type="EMBL" id="CAB82279.1"/>
    </source>
</evidence>
<protein>
    <recommendedName>
        <fullName evidence="7">Protein BREAST CANCER SUSCEPTIBILITY 2 homolog B</fullName>
        <shortName evidence="7">AtBRCA2B</shortName>
    </recommendedName>
</protein>
<name>BRC2B_ARATH</name>
<proteinExistence type="evidence at protein level"/>
<reference key="1">
    <citation type="journal article" date="2004" name="EMBO J.">
        <title>Brca2 is involved in meiosis in Arabidopsis thaliana as suggested by its interaction with Dmc1.</title>
        <authorList>
            <person name="Siaud N."/>
            <person name="Dray E."/>
            <person name="Gy I."/>
            <person name="Gerard E."/>
            <person name="Takvorian N."/>
            <person name="Doutriaux M.P."/>
        </authorList>
    </citation>
    <scope>NUCLEOTIDE SEQUENCE [MRNA]</scope>
    <scope>FUNCTION</scope>
    <scope>INTERACTION WITH RAD51 AND DMC1</scope>
    <scope>TISSUE SPECIFICITY</scope>
</reference>
<reference key="2">
    <citation type="journal article" date="2000" name="Nature">
        <title>Sequence and analysis of chromosome 5 of the plant Arabidopsis thaliana.</title>
        <authorList>
            <person name="Tabata S."/>
            <person name="Kaneko T."/>
            <person name="Nakamura Y."/>
            <person name="Kotani H."/>
            <person name="Kato T."/>
            <person name="Asamizu E."/>
            <person name="Miyajima N."/>
            <person name="Sasamoto S."/>
            <person name="Kimura T."/>
            <person name="Hosouchi T."/>
            <person name="Kawashima K."/>
            <person name="Kohara M."/>
            <person name="Matsumoto M."/>
            <person name="Matsuno A."/>
            <person name="Muraki A."/>
            <person name="Nakayama S."/>
            <person name="Nakazaki N."/>
            <person name="Naruo K."/>
            <person name="Okumura S."/>
            <person name="Shinpo S."/>
            <person name="Takeuchi C."/>
            <person name="Wada T."/>
            <person name="Watanabe A."/>
            <person name="Yamada M."/>
            <person name="Yasuda M."/>
            <person name="Sato S."/>
            <person name="de la Bastide M."/>
            <person name="Huang E."/>
            <person name="Spiegel L."/>
            <person name="Gnoj L."/>
            <person name="O'Shaughnessy A."/>
            <person name="Preston R."/>
            <person name="Habermann K."/>
            <person name="Murray J."/>
            <person name="Johnson D."/>
            <person name="Rohlfing T."/>
            <person name="Nelson J."/>
            <person name="Stoneking T."/>
            <person name="Pepin K."/>
            <person name="Spieth J."/>
            <person name="Sekhon M."/>
            <person name="Armstrong J."/>
            <person name="Becker M."/>
            <person name="Belter E."/>
            <person name="Cordum H."/>
            <person name="Cordes M."/>
            <person name="Courtney L."/>
            <person name="Courtney W."/>
            <person name="Dante M."/>
            <person name="Du H."/>
            <person name="Edwards J."/>
            <person name="Fryman J."/>
            <person name="Haakensen B."/>
            <person name="Lamar E."/>
            <person name="Latreille P."/>
            <person name="Leonard S."/>
            <person name="Meyer R."/>
            <person name="Mulvaney E."/>
            <person name="Ozersky P."/>
            <person name="Riley A."/>
            <person name="Strowmatt C."/>
            <person name="Wagner-McPherson C."/>
            <person name="Wollam A."/>
            <person name="Yoakum M."/>
            <person name="Bell M."/>
            <person name="Dedhia N."/>
            <person name="Parnell L."/>
            <person name="Shah R."/>
            <person name="Rodriguez M."/>
            <person name="Hoon See L."/>
            <person name="Vil D."/>
            <person name="Baker J."/>
            <person name="Kirchoff K."/>
            <person name="Toth K."/>
            <person name="King L."/>
            <person name="Bahret A."/>
            <person name="Miller B."/>
            <person name="Marra M.A."/>
            <person name="Martienssen R."/>
            <person name="McCombie W.R."/>
            <person name="Wilson R.K."/>
            <person name="Murphy G."/>
            <person name="Bancroft I."/>
            <person name="Volckaert G."/>
            <person name="Wambutt R."/>
            <person name="Duesterhoeft A."/>
            <person name="Stiekema W."/>
            <person name="Pohl T."/>
            <person name="Entian K.-D."/>
            <person name="Terryn N."/>
            <person name="Hartley N."/>
            <person name="Bent E."/>
            <person name="Johnson S."/>
            <person name="Langham S.-A."/>
            <person name="McCullagh B."/>
            <person name="Robben J."/>
            <person name="Grymonprez B."/>
            <person name="Zimmermann W."/>
            <person name="Ramsperger U."/>
            <person name="Wedler H."/>
            <person name="Balke K."/>
            <person name="Wedler E."/>
            <person name="Peters S."/>
            <person name="van Staveren M."/>
            <person name="Dirkse W."/>
            <person name="Mooijman P."/>
            <person name="Klein Lankhorst R."/>
            <person name="Weitzenegger T."/>
            <person name="Bothe G."/>
            <person name="Rose M."/>
            <person name="Hauf J."/>
            <person name="Berneiser S."/>
            <person name="Hempel S."/>
            <person name="Feldpausch M."/>
            <person name="Lamberth S."/>
            <person name="Villarroel R."/>
            <person name="Gielen J."/>
            <person name="Ardiles W."/>
            <person name="Bents O."/>
            <person name="Lemcke K."/>
            <person name="Kolesov G."/>
            <person name="Mayer K.F.X."/>
            <person name="Rudd S."/>
            <person name="Schoof H."/>
            <person name="Schueller C."/>
            <person name="Zaccaria P."/>
            <person name="Mewes H.-W."/>
            <person name="Bevan M."/>
            <person name="Fransz P.F."/>
        </authorList>
    </citation>
    <scope>NUCLEOTIDE SEQUENCE [LARGE SCALE GENOMIC DNA]</scope>
    <source>
        <strain>cv. Columbia</strain>
    </source>
</reference>
<reference key="3">
    <citation type="journal article" date="2017" name="Plant J.">
        <title>Araport11: a complete reannotation of the Arabidopsis thaliana reference genome.</title>
        <authorList>
            <person name="Cheng C.Y."/>
            <person name="Krishnakumar V."/>
            <person name="Chan A.P."/>
            <person name="Thibaud-Nissen F."/>
            <person name="Schobel S."/>
            <person name="Town C.D."/>
        </authorList>
    </citation>
    <scope>GENOME REANNOTATION</scope>
    <source>
        <strain>cv. Columbia</strain>
    </source>
</reference>
<reference key="4">
    <citation type="journal article" date="2003" name="Science">
        <title>Empirical analysis of transcriptional activity in the Arabidopsis genome.</title>
        <authorList>
            <person name="Yamada K."/>
            <person name="Lim J."/>
            <person name="Dale J.M."/>
            <person name="Chen H."/>
            <person name="Shinn P."/>
            <person name="Palm C.J."/>
            <person name="Southwick A.M."/>
            <person name="Wu H.C."/>
            <person name="Kim C.J."/>
            <person name="Nguyen M."/>
            <person name="Pham P.K."/>
            <person name="Cheuk R.F."/>
            <person name="Karlin-Newmann G."/>
            <person name="Liu S.X."/>
            <person name="Lam B."/>
            <person name="Sakano H."/>
            <person name="Wu T."/>
            <person name="Yu G."/>
            <person name="Miranda M."/>
            <person name="Quach H.L."/>
            <person name="Tripp M."/>
            <person name="Chang C.H."/>
            <person name="Lee J.M."/>
            <person name="Toriumi M.J."/>
            <person name="Chan M.M."/>
            <person name="Tang C.C."/>
            <person name="Onodera C.S."/>
            <person name="Deng J.M."/>
            <person name="Akiyama K."/>
            <person name="Ansari Y."/>
            <person name="Arakawa T."/>
            <person name="Banh J."/>
            <person name="Banno F."/>
            <person name="Bowser L."/>
            <person name="Brooks S.Y."/>
            <person name="Carninci P."/>
            <person name="Chao Q."/>
            <person name="Choy N."/>
            <person name="Enju A."/>
            <person name="Goldsmith A.D."/>
            <person name="Gurjal M."/>
            <person name="Hansen N.F."/>
            <person name="Hayashizaki Y."/>
            <person name="Johnson-Hopson C."/>
            <person name="Hsuan V.W."/>
            <person name="Iida K."/>
            <person name="Karnes M."/>
            <person name="Khan S."/>
            <person name="Koesema E."/>
            <person name="Ishida J."/>
            <person name="Jiang P.X."/>
            <person name="Jones T."/>
            <person name="Kawai J."/>
            <person name="Kamiya A."/>
            <person name="Meyers C."/>
            <person name="Nakajima M."/>
            <person name="Narusaka M."/>
            <person name="Seki M."/>
            <person name="Sakurai T."/>
            <person name="Satou M."/>
            <person name="Tamse R."/>
            <person name="Vaysberg M."/>
            <person name="Wallender E.K."/>
            <person name="Wong C."/>
            <person name="Yamamura Y."/>
            <person name="Yuan S."/>
            <person name="Shinozaki K."/>
            <person name="Davis R.W."/>
            <person name="Theologis A."/>
            <person name="Ecker J.R."/>
        </authorList>
    </citation>
    <scope>NUCLEOTIDE SEQUENCE [LARGE SCALE MRNA] OF 632-1155</scope>
    <source>
        <strain>cv. Columbia</strain>
    </source>
</reference>
<reference key="5">
    <citation type="journal article" date="2006" name="Plant Physiol.">
        <title>Interaction between Arabidopsis Brca2 and its partners Rad51, Dmc1, and Dss1.</title>
        <authorList>
            <person name="Dray E."/>
            <person name="Siaud N."/>
            <person name="Dubois E."/>
            <person name="Doutriaux M.P."/>
        </authorList>
    </citation>
    <scope>INTERACTION WITH RAD51; DMC1; DSS1(V) AND DSS1(I)</scope>
</reference>
<reference key="6">
    <citation type="journal article" date="2011" name="PLoS ONE">
        <title>Characterization of Brca2-deficient plants excludes the role of NHEJ and SSA in the meiotic chromosomal defect phenotype.</title>
        <authorList>
            <person name="Dumont M."/>
            <person name="Massot S."/>
            <person name="Doutriaux M.P."/>
            <person name="Gratias A."/>
        </authorList>
    </citation>
    <scope>FUNCTION</scope>
    <scope>DISRUPTION PHENOTYPE</scope>
</reference>
<reference key="7">
    <citation type="journal article" date="2012" name="New Phytol.">
        <title>BRCA2 is a mediator of RAD51- and DMC1-facilitated homologous recombination in Arabidopsis thaliana.</title>
        <authorList>
            <person name="Seeliger K."/>
            <person name="Dukowic-Schulze S."/>
            <person name="Wurz-Wildersinn R."/>
            <person name="Pacher M."/>
            <person name="Puchta H."/>
        </authorList>
    </citation>
    <scope>FUNCTION</scope>
    <scope>DISRUPTION PHENOTYPE</scope>
</reference>
<dbReference type="EMBL" id="AJ488305">
    <property type="protein sequence ID" value="CAD32572.1"/>
    <property type="molecule type" value="mRNA"/>
</dbReference>
<dbReference type="EMBL" id="AL161946">
    <property type="protein sequence ID" value="CAB82279.1"/>
    <property type="status" value="ALT_SEQ"/>
    <property type="molecule type" value="Genomic_DNA"/>
</dbReference>
<dbReference type="EMBL" id="CP002688">
    <property type="protein sequence ID" value="AED90369.1"/>
    <property type="molecule type" value="Genomic_DNA"/>
</dbReference>
<dbReference type="EMBL" id="BT004117">
    <property type="protein sequence ID" value="AAO42140.1"/>
    <property type="molecule type" value="mRNA"/>
</dbReference>
<dbReference type="PIR" id="T48184">
    <property type="entry name" value="T48184"/>
</dbReference>
<dbReference type="RefSeq" id="NP_195783.3">
    <property type="nucleotide sequence ID" value="NM_120241.4"/>
</dbReference>
<dbReference type="SMR" id="Q7Y1C4"/>
<dbReference type="BioGRID" id="16986">
    <property type="interactions" value="4"/>
</dbReference>
<dbReference type="FunCoup" id="Q7Y1C4">
    <property type="interactions" value="96"/>
</dbReference>
<dbReference type="IntAct" id="Q7Y1C4">
    <property type="interactions" value="5"/>
</dbReference>
<dbReference type="STRING" id="3702.Q7Y1C4"/>
<dbReference type="iPTMnet" id="Q7Y1C4"/>
<dbReference type="PaxDb" id="3702-AT5G01630.1"/>
<dbReference type="ProteomicsDB" id="222820"/>
<dbReference type="EnsemblPlants" id="AT5G01630.1">
    <property type="protein sequence ID" value="AT5G01630.1"/>
    <property type="gene ID" value="AT5G01630"/>
</dbReference>
<dbReference type="GeneID" id="831710"/>
<dbReference type="Gramene" id="AT5G01630.1">
    <property type="protein sequence ID" value="AT5G01630.1"/>
    <property type="gene ID" value="AT5G01630"/>
</dbReference>
<dbReference type="KEGG" id="ath:AT5G01630"/>
<dbReference type="Araport" id="AT5G01630"/>
<dbReference type="TAIR" id="AT5G01630">
    <property type="gene designation" value="BRCA2B"/>
</dbReference>
<dbReference type="eggNOG" id="KOG4751">
    <property type="taxonomic scope" value="Eukaryota"/>
</dbReference>
<dbReference type="HOGENOM" id="CLU_004336_0_0_1"/>
<dbReference type="InParanoid" id="Q7Y1C4"/>
<dbReference type="OMA" id="ISFCSPC"/>
<dbReference type="PhylomeDB" id="Q7Y1C4"/>
<dbReference type="PRO" id="PR:Q7Y1C4"/>
<dbReference type="Proteomes" id="UP000006548">
    <property type="component" value="Chromosome 5"/>
</dbReference>
<dbReference type="ExpressionAtlas" id="Q7Y1C4">
    <property type="expression patterns" value="baseline and differential"/>
</dbReference>
<dbReference type="GO" id="GO:0005739">
    <property type="term" value="C:mitochondrion"/>
    <property type="evidence" value="ECO:0007005"/>
    <property type="project" value="TAIR"/>
</dbReference>
<dbReference type="GO" id="GO:0003677">
    <property type="term" value="F:DNA binding"/>
    <property type="evidence" value="ECO:0007669"/>
    <property type="project" value="UniProtKB-KW"/>
</dbReference>
<dbReference type="GO" id="GO:0000724">
    <property type="term" value="P:double-strand break repair via homologous recombination"/>
    <property type="evidence" value="ECO:0000316"/>
    <property type="project" value="UniProtKB"/>
</dbReference>
<dbReference type="GO" id="GO:0051321">
    <property type="term" value="P:meiotic cell cycle"/>
    <property type="evidence" value="ECO:0000315"/>
    <property type="project" value="TAIR"/>
</dbReference>
<dbReference type="CDD" id="cd04493">
    <property type="entry name" value="BRCA2DBD_OB1"/>
    <property type="match status" value="1"/>
</dbReference>
<dbReference type="CDD" id="cd04494">
    <property type="entry name" value="BRCA2DBD_OB2"/>
    <property type="match status" value="1"/>
</dbReference>
<dbReference type="FunFam" id="2.40.50.140:FF:000262">
    <property type="entry name" value="Protein BREAST CANCER SUSCEPTIBILITY 2 homolog B"/>
    <property type="match status" value="1"/>
</dbReference>
<dbReference type="FunFam" id="2.40.50.140:FF:000267">
    <property type="entry name" value="Protein BREAST CANCER SUSCEPTIBILITY 2 homolog B"/>
    <property type="match status" value="1"/>
</dbReference>
<dbReference type="FunFam" id="2.40.50.140:FF:000282">
    <property type="entry name" value="Protein BREAST CANCER SUSCEPTIBILITY 2 homolog B"/>
    <property type="match status" value="1"/>
</dbReference>
<dbReference type="FunFam" id="2.40.50.140:FF:000297">
    <property type="entry name" value="Protein BREAST CANCER SUSCEPTIBILITY 2 homolog B"/>
    <property type="match status" value="1"/>
</dbReference>
<dbReference type="Gene3D" id="2.40.50.140">
    <property type="entry name" value="Nucleic acid-binding proteins"/>
    <property type="match status" value="4"/>
</dbReference>
<dbReference type="InterPro" id="IPR015525">
    <property type="entry name" value="BRCA2"/>
</dbReference>
<dbReference type="InterPro" id="IPR015252">
    <property type="entry name" value="BRCA2_hlx"/>
</dbReference>
<dbReference type="InterPro" id="IPR036315">
    <property type="entry name" value="BRCA2_hlx_sf"/>
</dbReference>
<dbReference type="InterPro" id="IPR015187">
    <property type="entry name" value="BRCA2_OB_1"/>
</dbReference>
<dbReference type="InterPro" id="IPR048262">
    <property type="entry name" value="BRCA2_OB_2_dom"/>
</dbReference>
<dbReference type="InterPro" id="IPR002093">
    <property type="entry name" value="BRCA2_repeat"/>
</dbReference>
<dbReference type="InterPro" id="IPR012340">
    <property type="entry name" value="NA-bd_OB-fold"/>
</dbReference>
<dbReference type="PANTHER" id="PTHR11289:SF0">
    <property type="entry name" value="BREAST CANCER TYPE 2 SUSCEPTIBILITY PROTEIN"/>
    <property type="match status" value="1"/>
</dbReference>
<dbReference type="PANTHER" id="PTHR11289">
    <property type="entry name" value="BREAST CANCER TYPE 2 SUSCEPTIBILITY PROTEIN BRCA2"/>
    <property type="match status" value="1"/>
</dbReference>
<dbReference type="Pfam" id="PF09169">
    <property type="entry name" value="BRCA-2_helical"/>
    <property type="match status" value="1"/>
</dbReference>
<dbReference type="Pfam" id="PF09103">
    <property type="entry name" value="BRCA-2_OB1"/>
    <property type="match status" value="1"/>
</dbReference>
<dbReference type="Pfam" id="PF00634">
    <property type="entry name" value="BRCA2"/>
    <property type="match status" value="3"/>
</dbReference>
<dbReference type="PIRSF" id="PIRSF002397">
    <property type="entry name" value="BRCA2"/>
    <property type="match status" value="1"/>
</dbReference>
<dbReference type="SUPFAM" id="SSF81872">
    <property type="entry name" value="BRCA2 helical domain"/>
    <property type="match status" value="1"/>
</dbReference>
<dbReference type="SUPFAM" id="SSF81878">
    <property type="entry name" value="BRCA2 tower domain"/>
    <property type="match status" value="1"/>
</dbReference>
<dbReference type="SUPFAM" id="SSF50249">
    <property type="entry name" value="Nucleic acid-binding proteins"/>
    <property type="match status" value="3"/>
</dbReference>
<dbReference type="PROSITE" id="PS50138">
    <property type="entry name" value="BRCA2_REPEAT"/>
    <property type="match status" value="2"/>
</dbReference>
<comment type="function">
    <text evidence="2 4 5">Involved in double-strand break repair and/or homologous recombination by mediating RAD51- and DMC1-facilitated DNA repair. Plays an essential role in both somatic and meiotic homologous recombination. Is crucial for the formation of RAD51 and DMC1 foci during male meiotic homologous recombination in prophase I.</text>
</comment>
<comment type="subunit">
    <text evidence="2 3">Interacts with RAD51 and DMC1 (PubMed:15014444, PubMed:16415210). Interacts with DSS1(I) and DSS1(V) (PubMed:16415210). Can interact with both RAD51 and DSS1(I) or both DMC1 and DSS1(I) in a tripartite complex (PubMed:16415210).</text>
</comment>
<comment type="interaction">
    <interactant intactId="EBI-307707">
        <id>Q7Y1C4</id>
    </interactant>
    <interactant intactId="EBI-307715">
        <id>Q39009</id>
        <label>DMC1</label>
    </interactant>
    <organismsDiffer>false</organismsDiffer>
    <experiments>6</experiments>
</comment>
<comment type="interaction">
    <interactant intactId="EBI-307707">
        <id>Q7Y1C4</id>
    </interactant>
    <interactant intactId="EBI-931045">
        <id>Q9XIR8</id>
        <label>DSS1(I)</label>
    </interactant>
    <organismsDiffer>false</organismsDiffer>
    <experiments>2</experiments>
</comment>
<comment type="interaction">
    <interactant intactId="EBI-307707">
        <id>Q7Y1C4</id>
    </interactant>
    <interactant intactId="EBI-931034">
        <id>Q9FL96</id>
        <label>DSS1(V)</label>
    </interactant>
    <organismsDiffer>false</organismsDiffer>
    <experiments>2</experiments>
</comment>
<comment type="interaction">
    <interactant intactId="EBI-307707">
        <id>Q7Y1C4</id>
    </interactant>
    <interactant intactId="EBI-307687">
        <id>P94102</id>
        <label>RAD51</label>
    </interactant>
    <organismsDiffer>false</organismsDiffer>
    <experiments>5</experiments>
</comment>
<comment type="tissue specificity">
    <text evidence="2">Expressed in flower buds.</text>
</comment>
<comment type="disruption phenotype">
    <text evidence="4 5">No visible phenotype under normal growth conditions, but the double mutants brca2a and brca2b are sterile due to aberrant chromosome aggregates, chromosomal fragmentation and missegregation during meiosis.</text>
</comment>
<comment type="sequence caution" evidence="8">
    <conflict type="erroneous gene model prediction">
        <sequence resource="EMBL-CDS" id="CAB82279"/>
    </conflict>
</comment>
<gene>
    <name evidence="7" type="primary">BRCA2B</name>
    <name evidence="6" type="synonym">BRCA2(V)</name>
    <name evidence="9" type="ordered locus">At5g01630</name>
    <name evidence="10" type="ORF">F7A7.150</name>
</gene>